<accession>B3GYL8</accession>
<proteinExistence type="inferred from homology"/>
<organism>
    <name type="scientific">Actinobacillus pleuropneumoniae serotype 7 (strain AP76)</name>
    <dbReference type="NCBI Taxonomy" id="537457"/>
    <lineage>
        <taxon>Bacteria</taxon>
        <taxon>Pseudomonadati</taxon>
        <taxon>Pseudomonadota</taxon>
        <taxon>Gammaproteobacteria</taxon>
        <taxon>Pasteurellales</taxon>
        <taxon>Pasteurellaceae</taxon>
        <taxon>Actinobacillus</taxon>
    </lineage>
</organism>
<feature type="chain" id="PRO_1000092298" description="N-acetylmuramic acid 6-phosphate etherase">
    <location>
        <begin position="1"/>
        <end position="304"/>
    </location>
</feature>
<feature type="domain" description="SIS" evidence="1">
    <location>
        <begin position="62"/>
        <end position="225"/>
    </location>
</feature>
<feature type="active site" description="Proton donor" evidence="1">
    <location>
        <position position="90"/>
    </location>
</feature>
<feature type="active site" evidence="1">
    <location>
        <position position="121"/>
    </location>
</feature>
<gene>
    <name evidence="1" type="primary">murQ</name>
    <name type="ordered locus">APP7_1597</name>
</gene>
<keyword id="KW-0119">Carbohydrate metabolism</keyword>
<keyword id="KW-0456">Lyase</keyword>
<sequence length="304" mass="32312">MSEKNLLTALSKMITEQRNPNSMNIDQLSALELVKVINQEDKQVPLAVEKCLAQIAQAVEKIVQAFQNGGRLVYIGAGTSGRLGVLDASECPPTYGVSSEMVVGIIAGGERALRHPIEGAEDNTEQGKAALQAVNFSQKDVLVGIAASGRTPYVIGALEYAKSLGATTVSIASNPNSAMAQIAEIAIDTVVGPEILTGSSRMKSGTAQKLVLNMLTTASMVMIGKCYSNLMVDVQASNEKLKARAIKIVMEATECDRTVAENTLKIAENNAKLAIMMILSDSDKTTAEQLLSKHHGKLRQALVN</sequence>
<comment type="function">
    <text evidence="1">Specifically catalyzes the cleavage of the D-lactyl ether substituent of MurNAc 6-phosphate, producing GlcNAc 6-phosphate and D-lactate. Together with AnmK, is also required for the utilization of anhydro-N-acetylmuramic acid (anhMurNAc) either imported from the medium or derived from its own cell wall murein, and thus plays a role in cell wall recycling.</text>
</comment>
<comment type="catalytic activity">
    <reaction evidence="1">
        <text>N-acetyl-D-muramate 6-phosphate + H2O = N-acetyl-D-glucosamine 6-phosphate + (R)-lactate</text>
        <dbReference type="Rhea" id="RHEA:26410"/>
        <dbReference type="ChEBI" id="CHEBI:15377"/>
        <dbReference type="ChEBI" id="CHEBI:16004"/>
        <dbReference type="ChEBI" id="CHEBI:57513"/>
        <dbReference type="ChEBI" id="CHEBI:58722"/>
        <dbReference type="EC" id="4.2.1.126"/>
    </reaction>
</comment>
<comment type="pathway">
    <text evidence="1">Amino-sugar metabolism; 1,6-anhydro-N-acetylmuramate degradation.</text>
</comment>
<comment type="pathway">
    <text evidence="1">Amino-sugar metabolism; N-acetylmuramate degradation.</text>
</comment>
<comment type="pathway">
    <text evidence="1">Cell wall biogenesis; peptidoglycan recycling.</text>
</comment>
<comment type="subunit">
    <text evidence="1">Homodimer.</text>
</comment>
<comment type="miscellaneous">
    <text evidence="1">A lyase-type mechanism (elimination/hydration) is suggested for the cleavage of the lactyl ether bond of MurNAc 6-phosphate, with the formation of an alpha,beta-unsaturated aldehyde intermediate with (E)-stereochemistry, followed by the syn addition of water to give product.</text>
</comment>
<comment type="similarity">
    <text evidence="1">Belongs to the GCKR-like family. MurNAc-6-P etherase subfamily.</text>
</comment>
<dbReference type="EC" id="4.2.1.126" evidence="1"/>
<dbReference type="EMBL" id="CP001091">
    <property type="protein sequence ID" value="ACE62249.1"/>
    <property type="molecule type" value="Genomic_DNA"/>
</dbReference>
<dbReference type="RefSeq" id="WP_005618000.1">
    <property type="nucleotide sequence ID" value="NC_010939.1"/>
</dbReference>
<dbReference type="SMR" id="B3GYL8"/>
<dbReference type="KEGG" id="apa:APP7_1597"/>
<dbReference type="HOGENOM" id="CLU_049049_1_1_6"/>
<dbReference type="UniPathway" id="UPA00342"/>
<dbReference type="UniPathway" id="UPA00343"/>
<dbReference type="UniPathway" id="UPA00544"/>
<dbReference type="Proteomes" id="UP000001226">
    <property type="component" value="Chromosome"/>
</dbReference>
<dbReference type="GO" id="GO:0097367">
    <property type="term" value="F:carbohydrate derivative binding"/>
    <property type="evidence" value="ECO:0007669"/>
    <property type="project" value="InterPro"/>
</dbReference>
<dbReference type="GO" id="GO:0016835">
    <property type="term" value="F:carbon-oxygen lyase activity"/>
    <property type="evidence" value="ECO:0007669"/>
    <property type="project" value="UniProtKB-UniRule"/>
</dbReference>
<dbReference type="GO" id="GO:0016803">
    <property type="term" value="F:ether hydrolase activity"/>
    <property type="evidence" value="ECO:0007669"/>
    <property type="project" value="TreeGrafter"/>
</dbReference>
<dbReference type="GO" id="GO:0097175">
    <property type="term" value="P:1,6-anhydro-N-acetyl-beta-muramic acid catabolic process"/>
    <property type="evidence" value="ECO:0007669"/>
    <property type="project" value="UniProtKB-UniRule"/>
</dbReference>
<dbReference type="GO" id="GO:0046348">
    <property type="term" value="P:amino sugar catabolic process"/>
    <property type="evidence" value="ECO:0007669"/>
    <property type="project" value="InterPro"/>
</dbReference>
<dbReference type="GO" id="GO:0097173">
    <property type="term" value="P:N-acetylmuramic acid catabolic process"/>
    <property type="evidence" value="ECO:0007669"/>
    <property type="project" value="UniProtKB-UniPathway"/>
</dbReference>
<dbReference type="GO" id="GO:0009254">
    <property type="term" value="P:peptidoglycan turnover"/>
    <property type="evidence" value="ECO:0007669"/>
    <property type="project" value="UniProtKB-UniRule"/>
</dbReference>
<dbReference type="CDD" id="cd05007">
    <property type="entry name" value="SIS_Etherase"/>
    <property type="match status" value="1"/>
</dbReference>
<dbReference type="FunFam" id="1.10.8.1080:FF:000001">
    <property type="entry name" value="N-acetylmuramic acid 6-phosphate etherase"/>
    <property type="match status" value="1"/>
</dbReference>
<dbReference type="FunFam" id="3.40.50.10490:FF:000014">
    <property type="entry name" value="N-acetylmuramic acid 6-phosphate etherase"/>
    <property type="match status" value="1"/>
</dbReference>
<dbReference type="Gene3D" id="1.10.8.1080">
    <property type="match status" value="1"/>
</dbReference>
<dbReference type="Gene3D" id="3.40.50.10490">
    <property type="entry name" value="Glucose-6-phosphate isomerase like protein, domain 1"/>
    <property type="match status" value="1"/>
</dbReference>
<dbReference type="HAMAP" id="MF_00068">
    <property type="entry name" value="MurQ"/>
    <property type="match status" value="1"/>
</dbReference>
<dbReference type="InterPro" id="IPR005488">
    <property type="entry name" value="Etherase_MurQ"/>
</dbReference>
<dbReference type="InterPro" id="IPR005486">
    <property type="entry name" value="Glucokinase_regulatory_CS"/>
</dbReference>
<dbReference type="InterPro" id="IPR040190">
    <property type="entry name" value="MURQ/GCKR"/>
</dbReference>
<dbReference type="InterPro" id="IPR001347">
    <property type="entry name" value="SIS_dom"/>
</dbReference>
<dbReference type="InterPro" id="IPR046348">
    <property type="entry name" value="SIS_dom_sf"/>
</dbReference>
<dbReference type="NCBIfam" id="TIGR00274">
    <property type="entry name" value="N-acetylmuramic acid 6-phosphate etherase"/>
    <property type="match status" value="1"/>
</dbReference>
<dbReference type="NCBIfam" id="NF003915">
    <property type="entry name" value="PRK05441.1"/>
    <property type="match status" value="1"/>
</dbReference>
<dbReference type="NCBIfam" id="NF009222">
    <property type="entry name" value="PRK12570.1"/>
    <property type="match status" value="1"/>
</dbReference>
<dbReference type="PANTHER" id="PTHR10088">
    <property type="entry name" value="GLUCOKINASE REGULATORY PROTEIN"/>
    <property type="match status" value="1"/>
</dbReference>
<dbReference type="PANTHER" id="PTHR10088:SF4">
    <property type="entry name" value="GLUCOKINASE REGULATORY PROTEIN"/>
    <property type="match status" value="1"/>
</dbReference>
<dbReference type="Pfam" id="PF22645">
    <property type="entry name" value="GKRP_SIS_N"/>
    <property type="match status" value="1"/>
</dbReference>
<dbReference type="SUPFAM" id="SSF53697">
    <property type="entry name" value="SIS domain"/>
    <property type="match status" value="1"/>
</dbReference>
<dbReference type="PROSITE" id="PS01272">
    <property type="entry name" value="GCKR"/>
    <property type="match status" value="1"/>
</dbReference>
<dbReference type="PROSITE" id="PS51464">
    <property type="entry name" value="SIS"/>
    <property type="match status" value="1"/>
</dbReference>
<reference key="1">
    <citation type="submission" date="2008-06" db="EMBL/GenBank/DDBJ databases">
        <title>Genome and proteome analysis of A. pleuropneumoniae serotype 7.</title>
        <authorList>
            <person name="Linke B."/>
            <person name="Buettner F."/>
            <person name="Martinez-Arias R."/>
            <person name="Goesmann A."/>
            <person name="Baltes N."/>
            <person name="Tegetmeyer H."/>
            <person name="Singh M."/>
            <person name="Gerlach G.F."/>
        </authorList>
    </citation>
    <scope>NUCLEOTIDE SEQUENCE [LARGE SCALE GENOMIC DNA]</scope>
    <source>
        <strain>AP76</strain>
    </source>
</reference>
<evidence type="ECO:0000255" key="1">
    <source>
        <dbReference type="HAMAP-Rule" id="MF_00068"/>
    </source>
</evidence>
<name>MURQ_ACTP7</name>
<protein>
    <recommendedName>
        <fullName evidence="1">N-acetylmuramic acid 6-phosphate etherase</fullName>
        <shortName evidence="1">MurNAc-6-P etherase</shortName>
        <ecNumber evidence="1">4.2.1.126</ecNumber>
    </recommendedName>
    <alternativeName>
        <fullName evidence="1">N-acetylmuramic acid 6-phosphate hydrolase</fullName>
    </alternativeName>
    <alternativeName>
        <fullName evidence="1">N-acetylmuramic acid 6-phosphate lyase</fullName>
    </alternativeName>
</protein>